<name>YACG_SALTY</name>
<protein>
    <recommendedName>
        <fullName evidence="1">DNA gyrase inhibitor YacG</fullName>
    </recommendedName>
</protein>
<dbReference type="EMBL" id="AE006468">
    <property type="protein sequence ID" value="AAL19102.1"/>
    <property type="molecule type" value="Genomic_DNA"/>
</dbReference>
<dbReference type="RefSeq" id="NP_459143.1">
    <property type="nucleotide sequence ID" value="NC_003197.2"/>
</dbReference>
<dbReference type="RefSeq" id="WP_001286419.1">
    <property type="nucleotide sequence ID" value="NC_003197.2"/>
</dbReference>
<dbReference type="SMR" id="P67481"/>
<dbReference type="STRING" id="99287.STM0138"/>
<dbReference type="PaxDb" id="99287-STM0138"/>
<dbReference type="GeneID" id="1251656"/>
<dbReference type="KEGG" id="stm:STM0138"/>
<dbReference type="PATRIC" id="fig|99287.12.peg.146"/>
<dbReference type="HOGENOM" id="CLU_178280_3_1_6"/>
<dbReference type="OMA" id="WAAEEHK"/>
<dbReference type="PhylomeDB" id="P67481"/>
<dbReference type="BioCyc" id="SENT99287:STM0138-MONOMER"/>
<dbReference type="Proteomes" id="UP000001014">
    <property type="component" value="Chromosome"/>
</dbReference>
<dbReference type="GO" id="GO:0008657">
    <property type="term" value="F:DNA topoisomerase type II (double strand cut, ATP-hydrolyzing) inhibitor activity"/>
    <property type="evidence" value="ECO:0000318"/>
    <property type="project" value="GO_Central"/>
</dbReference>
<dbReference type="GO" id="GO:0008270">
    <property type="term" value="F:zinc ion binding"/>
    <property type="evidence" value="ECO:0007669"/>
    <property type="project" value="UniProtKB-UniRule"/>
</dbReference>
<dbReference type="GO" id="GO:0006355">
    <property type="term" value="P:regulation of DNA-templated transcription"/>
    <property type="evidence" value="ECO:0007669"/>
    <property type="project" value="InterPro"/>
</dbReference>
<dbReference type="Gene3D" id="3.30.50.10">
    <property type="entry name" value="Erythroid Transcription Factor GATA-1, subunit A"/>
    <property type="match status" value="1"/>
</dbReference>
<dbReference type="HAMAP" id="MF_00649">
    <property type="entry name" value="DNA_gyrase_inhibitor_YacG"/>
    <property type="match status" value="1"/>
</dbReference>
<dbReference type="InterPro" id="IPR005584">
    <property type="entry name" value="DNA_gyrase_inhibitor_YacG"/>
</dbReference>
<dbReference type="InterPro" id="IPR013088">
    <property type="entry name" value="Znf_NHR/GATA"/>
</dbReference>
<dbReference type="NCBIfam" id="NF001638">
    <property type="entry name" value="PRK00418.1"/>
    <property type="match status" value="1"/>
</dbReference>
<dbReference type="PANTHER" id="PTHR36150">
    <property type="entry name" value="DNA GYRASE INHIBITOR YACG"/>
    <property type="match status" value="1"/>
</dbReference>
<dbReference type="PANTHER" id="PTHR36150:SF1">
    <property type="entry name" value="DNA GYRASE INHIBITOR YACG"/>
    <property type="match status" value="1"/>
</dbReference>
<dbReference type="Pfam" id="PF03884">
    <property type="entry name" value="YacG"/>
    <property type="match status" value="1"/>
</dbReference>
<dbReference type="SUPFAM" id="SSF57716">
    <property type="entry name" value="Glucocorticoid receptor-like (DNA-binding domain)"/>
    <property type="match status" value="1"/>
</dbReference>
<feature type="chain" id="PRO_0000211724" description="DNA gyrase inhibitor YacG">
    <location>
        <begin position="1"/>
        <end position="63"/>
    </location>
</feature>
<feature type="binding site" evidence="1">
    <location>
        <position position="9"/>
    </location>
    <ligand>
        <name>Zn(2+)</name>
        <dbReference type="ChEBI" id="CHEBI:29105"/>
    </ligand>
</feature>
<feature type="binding site" evidence="1">
    <location>
        <position position="12"/>
    </location>
    <ligand>
        <name>Zn(2+)</name>
        <dbReference type="ChEBI" id="CHEBI:29105"/>
    </ligand>
</feature>
<feature type="binding site" evidence="1">
    <location>
        <position position="28"/>
    </location>
    <ligand>
        <name>Zn(2+)</name>
        <dbReference type="ChEBI" id="CHEBI:29105"/>
    </ligand>
</feature>
<feature type="binding site" evidence="1">
    <location>
        <position position="32"/>
    </location>
    <ligand>
        <name>Zn(2+)</name>
        <dbReference type="ChEBI" id="CHEBI:29105"/>
    </ligand>
</feature>
<proteinExistence type="inferred from homology"/>
<sequence length="63" mass="7050">MSDVTVVNCPTCGKPVVWGEISPFRPFCSKRCQLIDLGEWAAEEKRIASSGDQSDSDDWSEER</sequence>
<reference key="1">
    <citation type="journal article" date="2001" name="Nature">
        <title>Complete genome sequence of Salmonella enterica serovar Typhimurium LT2.</title>
        <authorList>
            <person name="McClelland M."/>
            <person name="Sanderson K.E."/>
            <person name="Spieth J."/>
            <person name="Clifton S.W."/>
            <person name="Latreille P."/>
            <person name="Courtney L."/>
            <person name="Porwollik S."/>
            <person name="Ali J."/>
            <person name="Dante M."/>
            <person name="Du F."/>
            <person name="Hou S."/>
            <person name="Layman D."/>
            <person name="Leonard S."/>
            <person name="Nguyen C."/>
            <person name="Scott K."/>
            <person name="Holmes A."/>
            <person name="Grewal N."/>
            <person name="Mulvaney E."/>
            <person name="Ryan E."/>
            <person name="Sun H."/>
            <person name="Florea L."/>
            <person name="Miller W."/>
            <person name="Stoneking T."/>
            <person name="Nhan M."/>
            <person name="Waterston R."/>
            <person name="Wilson R.K."/>
        </authorList>
    </citation>
    <scope>NUCLEOTIDE SEQUENCE [LARGE SCALE GENOMIC DNA]</scope>
    <source>
        <strain>LT2 / SGSC1412 / ATCC 700720</strain>
    </source>
</reference>
<gene>
    <name evidence="1" type="primary">yacG</name>
    <name type="ordered locus">STM0138</name>
</gene>
<keyword id="KW-0479">Metal-binding</keyword>
<keyword id="KW-1185">Reference proteome</keyword>
<keyword id="KW-0862">Zinc</keyword>
<accession>P67481</accession>
<accession>Q8XFY1</accession>
<comment type="function">
    <text evidence="1">Inhibits all the catalytic activities of DNA gyrase by preventing its interaction with DNA. Acts by binding directly to the C-terminal domain of GyrB, which probably disrupts DNA binding by the gyrase.</text>
</comment>
<comment type="cofactor">
    <cofactor evidence="1">
        <name>Zn(2+)</name>
        <dbReference type="ChEBI" id="CHEBI:29105"/>
    </cofactor>
    <text evidence="1">Binds 1 zinc ion.</text>
</comment>
<comment type="subunit">
    <text evidence="1">Interacts with GyrB.</text>
</comment>
<comment type="similarity">
    <text evidence="1">Belongs to the DNA gyrase inhibitor YacG family.</text>
</comment>
<organism>
    <name type="scientific">Salmonella typhimurium (strain LT2 / SGSC1412 / ATCC 700720)</name>
    <dbReference type="NCBI Taxonomy" id="99287"/>
    <lineage>
        <taxon>Bacteria</taxon>
        <taxon>Pseudomonadati</taxon>
        <taxon>Pseudomonadota</taxon>
        <taxon>Gammaproteobacteria</taxon>
        <taxon>Enterobacterales</taxon>
        <taxon>Enterobacteriaceae</taxon>
        <taxon>Salmonella</taxon>
    </lineage>
</organism>
<evidence type="ECO:0000255" key="1">
    <source>
        <dbReference type="HAMAP-Rule" id="MF_00649"/>
    </source>
</evidence>